<accession>A4YSL6</accession>
<name>RPOA_BRASO</name>
<sequence length="343" mass="37916">MGETVTIQKNWQELIRPNKLQVTPGSDATRFATVVAEPLERGFGQTLGNALRRILLSSLQGAAVQSVHIDGVLHEFSSIAGVREDVTDIVLNIKDISIKMQGEGPKRMVVKKQGPGAVTAGDIQTVGDIVVLNPDLQLCTLDEGAEIRMEFTVATGKGYVPAERNRPEDAPIGLIPIDSLFSPVRKVSYKVENTREGQILDYDKLTMTIETNGAISPEDAVAYAARILQDQLNVFVNFEEPRKEVAQEIIPDLAFNPAFLKKVDELELSVRSANCLKNDNIVYIGDLVQKSEAEMLRTPNFGRKSLNEIKEVLAQMGLHLGMEVPGWPPENIDELAKRFEDHY</sequence>
<keyword id="KW-0240">DNA-directed RNA polymerase</keyword>
<keyword id="KW-0548">Nucleotidyltransferase</keyword>
<keyword id="KW-1185">Reference proteome</keyword>
<keyword id="KW-0804">Transcription</keyword>
<keyword id="KW-0808">Transferase</keyword>
<evidence type="ECO:0000255" key="1">
    <source>
        <dbReference type="HAMAP-Rule" id="MF_00059"/>
    </source>
</evidence>
<proteinExistence type="inferred from homology"/>
<comment type="function">
    <text evidence="1">DNA-dependent RNA polymerase catalyzes the transcription of DNA into RNA using the four ribonucleoside triphosphates as substrates.</text>
</comment>
<comment type="catalytic activity">
    <reaction evidence="1">
        <text>RNA(n) + a ribonucleoside 5'-triphosphate = RNA(n+1) + diphosphate</text>
        <dbReference type="Rhea" id="RHEA:21248"/>
        <dbReference type="Rhea" id="RHEA-COMP:14527"/>
        <dbReference type="Rhea" id="RHEA-COMP:17342"/>
        <dbReference type="ChEBI" id="CHEBI:33019"/>
        <dbReference type="ChEBI" id="CHEBI:61557"/>
        <dbReference type="ChEBI" id="CHEBI:140395"/>
        <dbReference type="EC" id="2.7.7.6"/>
    </reaction>
</comment>
<comment type="subunit">
    <text evidence="1">Homodimer. The RNAP catalytic core consists of 2 alpha, 1 beta, 1 beta' and 1 omega subunit. When a sigma factor is associated with the core the holoenzyme is formed, which can initiate transcription.</text>
</comment>
<comment type="domain">
    <text evidence="1">The N-terminal domain is essential for RNAP assembly and basal transcription, whereas the C-terminal domain is involved in interaction with transcriptional regulators and with upstream promoter elements.</text>
</comment>
<comment type="similarity">
    <text evidence="1">Belongs to the RNA polymerase alpha chain family.</text>
</comment>
<protein>
    <recommendedName>
        <fullName evidence="1">DNA-directed RNA polymerase subunit alpha</fullName>
        <shortName evidence="1">RNAP subunit alpha</shortName>
        <ecNumber evidence="1">2.7.7.6</ecNumber>
    </recommendedName>
    <alternativeName>
        <fullName evidence="1">RNA polymerase subunit alpha</fullName>
    </alternativeName>
    <alternativeName>
        <fullName evidence="1">Transcriptase subunit alpha</fullName>
    </alternativeName>
</protein>
<feature type="chain" id="PRO_0000296786" description="DNA-directed RNA polymerase subunit alpha">
    <location>
        <begin position="1"/>
        <end position="343"/>
    </location>
</feature>
<feature type="region of interest" description="Alpha N-terminal domain (alpha-NTD)" evidence="1">
    <location>
        <begin position="1"/>
        <end position="239"/>
    </location>
</feature>
<feature type="region of interest" description="Alpha C-terminal domain (alpha-CTD)" evidence="1">
    <location>
        <begin position="255"/>
        <end position="343"/>
    </location>
</feature>
<dbReference type="EC" id="2.7.7.6" evidence="1"/>
<dbReference type="EMBL" id="CU234118">
    <property type="protein sequence ID" value="CAL76892.1"/>
    <property type="molecule type" value="Genomic_DNA"/>
</dbReference>
<dbReference type="RefSeq" id="WP_011926060.1">
    <property type="nucleotide sequence ID" value="NC_009445.1"/>
</dbReference>
<dbReference type="SMR" id="A4YSL6"/>
<dbReference type="STRING" id="114615.BRADO3090"/>
<dbReference type="KEGG" id="bra:BRADO3090"/>
<dbReference type="eggNOG" id="COG0202">
    <property type="taxonomic scope" value="Bacteria"/>
</dbReference>
<dbReference type="HOGENOM" id="CLU_053084_0_0_5"/>
<dbReference type="OrthoDB" id="9805706at2"/>
<dbReference type="Proteomes" id="UP000001994">
    <property type="component" value="Chromosome"/>
</dbReference>
<dbReference type="GO" id="GO:0005737">
    <property type="term" value="C:cytoplasm"/>
    <property type="evidence" value="ECO:0007669"/>
    <property type="project" value="UniProtKB-ARBA"/>
</dbReference>
<dbReference type="GO" id="GO:0000428">
    <property type="term" value="C:DNA-directed RNA polymerase complex"/>
    <property type="evidence" value="ECO:0007669"/>
    <property type="project" value="UniProtKB-KW"/>
</dbReference>
<dbReference type="GO" id="GO:0003677">
    <property type="term" value="F:DNA binding"/>
    <property type="evidence" value="ECO:0007669"/>
    <property type="project" value="UniProtKB-UniRule"/>
</dbReference>
<dbReference type="GO" id="GO:0003899">
    <property type="term" value="F:DNA-directed RNA polymerase activity"/>
    <property type="evidence" value="ECO:0007669"/>
    <property type="project" value="UniProtKB-UniRule"/>
</dbReference>
<dbReference type="GO" id="GO:0046983">
    <property type="term" value="F:protein dimerization activity"/>
    <property type="evidence" value="ECO:0007669"/>
    <property type="project" value="InterPro"/>
</dbReference>
<dbReference type="GO" id="GO:0006351">
    <property type="term" value="P:DNA-templated transcription"/>
    <property type="evidence" value="ECO:0007669"/>
    <property type="project" value="UniProtKB-UniRule"/>
</dbReference>
<dbReference type="CDD" id="cd06928">
    <property type="entry name" value="RNAP_alpha_NTD"/>
    <property type="match status" value="1"/>
</dbReference>
<dbReference type="FunFam" id="1.10.150.20:FF:000001">
    <property type="entry name" value="DNA-directed RNA polymerase subunit alpha"/>
    <property type="match status" value="1"/>
</dbReference>
<dbReference type="FunFam" id="2.170.120.12:FF:000001">
    <property type="entry name" value="DNA-directed RNA polymerase subunit alpha"/>
    <property type="match status" value="1"/>
</dbReference>
<dbReference type="Gene3D" id="1.10.150.20">
    <property type="entry name" value="5' to 3' exonuclease, C-terminal subdomain"/>
    <property type="match status" value="1"/>
</dbReference>
<dbReference type="Gene3D" id="2.170.120.12">
    <property type="entry name" value="DNA-directed RNA polymerase, insert domain"/>
    <property type="match status" value="1"/>
</dbReference>
<dbReference type="Gene3D" id="3.30.1360.10">
    <property type="entry name" value="RNA polymerase, RBP11-like subunit"/>
    <property type="match status" value="1"/>
</dbReference>
<dbReference type="HAMAP" id="MF_00059">
    <property type="entry name" value="RNApol_bact_RpoA"/>
    <property type="match status" value="1"/>
</dbReference>
<dbReference type="InterPro" id="IPR011262">
    <property type="entry name" value="DNA-dir_RNA_pol_insert"/>
</dbReference>
<dbReference type="InterPro" id="IPR011263">
    <property type="entry name" value="DNA-dir_RNA_pol_RpoA/D/Rpb3"/>
</dbReference>
<dbReference type="InterPro" id="IPR011773">
    <property type="entry name" value="DNA-dir_RpoA"/>
</dbReference>
<dbReference type="InterPro" id="IPR036603">
    <property type="entry name" value="RBP11-like"/>
</dbReference>
<dbReference type="InterPro" id="IPR011260">
    <property type="entry name" value="RNAP_asu_C"/>
</dbReference>
<dbReference type="InterPro" id="IPR036643">
    <property type="entry name" value="RNApol_insert_sf"/>
</dbReference>
<dbReference type="NCBIfam" id="NF003513">
    <property type="entry name" value="PRK05182.1-2"/>
    <property type="match status" value="1"/>
</dbReference>
<dbReference type="NCBIfam" id="NF003519">
    <property type="entry name" value="PRK05182.2-5"/>
    <property type="match status" value="1"/>
</dbReference>
<dbReference type="NCBIfam" id="TIGR02027">
    <property type="entry name" value="rpoA"/>
    <property type="match status" value="1"/>
</dbReference>
<dbReference type="Pfam" id="PF01000">
    <property type="entry name" value="RNA_pol_A_bac"/>
    <property type="match status" value="1"/>
</dbReference>
<dbReference type="Pfam" id="PF03118">
    <property type="entry name" value="RNA_pol_A_CTD"/>
    <property type="match status" value="1"/>
</dbReference>
<dbReference type="Pfam" id="PF01193">
    <property type="entry name" value="RNA_pol_L"/>
    <property type="match status" value="1"/>
</dbReference>
<dbReference type="SMART" id="SM00662">
    <property type="entry name" value="RPOLD"/>
    <property type="match status" value="1"/>
</dbReference>
<dbReference type="SUPFAM" id="SSF47789">
    <property type="entry name" value="C-terminal domain of RNA polymerase alpha subunit"/>
    <property type="match status" value="1"/>
</dbReference>
<dbReference type="SUPFAM" id="SSF56553">
    <property type="entry name" value="Insert subdomain of RNA polymerase alpha subunit"/>
    <property type="match status" value="1"/>
</dbReference>
<dbReference type="SUPFAM" id="SSF55257">
    <property type="entry name" value="RBP11-like subunits of RNA polymerase"/>
    <property type="match status" value="1"/>
</dbReference>
<organism>
    <name type="scientific">Bradyrhizobium sp. (strain ORS 278)</name>
    <dbReference type="NCBI Taxonomy" id="114615"/>
    <lineage>
        <taxon>Bacteria</taxon>
        <taxon>Pseudomonadati</taxon>
        <taxon>Pseudomonadota</taxon>
        <taxon>Alphaproteobacteria</taxon>
        <taxon>Hyphomicrobiales</taxon>
        <taxon>Nitrobacteraceae</taxon>
        <taxon>Bradyrhizobium</taxon>
    </lineage>
</organism>
<reference key="1">
    <citation type="journal article" date="2007" name="Science">
        <title>Legumes symbioses: absence of nod genes in photosynthetic bradyrhizobia.</title>
        <authorList>
            <person name="Giraud E."/>
            <person name="Moulin L."/>
            <person name="Vallenet D."/>
            <person name="Barbe V."/>
            <person name="Cytryn E."/>
            <person name="Avarre J.-C."/>
            <person name="Jaubert M."/>
            <person name="Simon D."/>
            <person name="Cartieaux F."/>
            <person name="Prin Y."/>
            <person name="Bena G."/>
            <person name="Hannibal L."/>
            <person name="Fardoux J."/>
            <person name="Kojadinovic M."/>
            <person name="Vuillet L."/>
            <person name="Lajus A."/>
            <person name="Cruveiller S."/>
            <person name="Rouy Z."/>
            <person name="Mangenot S."/>
            <person name="Segurens B."/>
            <person name="Dossat C."/>
            <person name="Franck W.L."/>
            <person name="Chang W.-S."/>
            <person name="Saunders E."/>
            <person name="Bruce D."/>
            <person name="Richardson P."/>
            <person name="Normand P."/>
            <person name="Dreyfus B."/>
            <person name="Pignol D."/>
            <person name="Stacey G."/>
            <person name="Emerich D."/>
            <person name="Vermeglio A."/>
            <person name="Medigue C."/>
            <person name="Sadowsky M."/>
        </authorList>
    </citation>
    <scope>NUCLEOTIDE SEQUENCE [LARGE SCALE GENOMIC DNA]</scope>
    <source>
        <strain>ORS 278</strain>
    </source>
</reference>
<gene>
    <name evidence="1" type="primary">rpoA</name>
    <name type="ordered locus">BRADO3090</name>
</gene>